<organism>
    <name type="scientific">Homo sapiens</name>
    <name type="common">Human</name>
    <dbReference type="NCBI Taxonomy" id="9606"/>
    <lineage>
        <taxon>Eukaryota</taxon>
        <taxon>Metazoa</taxon>
        <taxon>Chordata</taxon>
        <taxon>Craniata</taxon>
        <taxon>Vertebrata</taxon>
        <taxon>Euteleostomi</taxon>
        <taxon>Mammalia</taxon>
        <taxon>Eutheria</taxon>
        <taxon>Euarchontoglires</taxon>
        <taxon>Primates</taxon>
        <taxon>Haplorrhini</taxon>
        <taxon>Catarrhini</taxon>
        <taxon>Hominidae</taxon>
        <taxon>Homo</taxon>
    </lineage>
</organism>
<reference key="1">
    <citation type="journal article" date="2004" name="Nature">
        <title>The DNA sequence and biology of human chromosome 19.</title>
        <authorList>
            <person name="Grimwood J."/>
            <person name="Gordon L.A."/>
            <person name="Olsen A.S."/>
            <person name="Terry A."/>
            <person name="Schmutz J."/>
            <person name="Lamerdin J.E."/>
            <person name="Hellsten U."/>
            <person name="Goodstein D."/>
            <person name="Couronne O."/>
            <person name="Tran-Gyamfi M."/>
            <person name="Aerts A."/>
            <person name="Altherr M."/>
            <person name="Ashworth L."/>
            <person name="Bajorek E."/>
            <person name="Black S."/>
            <person name="Branscomb E."/>
            <person name="Caenepeel S."/>
            <person name="Carrano A.V."/>
            <person name="Caoile C."/>
            <person name="Chan Y.M."/>
            <person name="Christensen M."/>
            <person name="Cleland C.A."/>
            <person name="Copeland A."/>
            <person name="Dalin E."/>
            <person name="Dehal P."/>
            <person name="Denys M."/>
            <person name="Detter J.C."/>
            <person name="Escobar J."/>
            <person name="Flowers D."/>
            <person name="Fotopulos D."/>
            <person name="Garcia C."/>
            <person name="Georgescu A.M."/>
            <person name="Glavina T."/>
            <person name="Gomez M."/>
            <person name="Gonzales E."/>
            <person name="Groza M."/>
            <person name="Hammon N."/>
            <person name="Hawkins T."/>
            <person name="Haydu L."/>
            <person name="Ho I."/>
            <person name="Huang W."/>
            <person name="Israni S."/>
            <person name="Jett J."/>
            <person name="Kadner K."/>
            <person name="Kimball H."/>
            <person name="Kobayashi A."/>
            <person name="Larionov V."/>
            <person name="Leem S.-H."/>
            <person name="Lopez F."/>
            <person name="Lou Y."/>
            <person name="Lowry S."/>
            <person name="Malfatti S."/>
            <person name="Martinez D."/>
            <person name="McCready P.M."/>
            <person name="Medina C."/>
            <person name="Morgan J."/>
            <person name="Nelson K."/>
            <person name="Nolan M."/>
            <person name="Ovcharenko I."/>
            <person name="Pitluck S."/>
            <person name="Pollard M."/>
            <person name="Popkie A.P."/>
            <person name="Predki P."/>
            <person name="Quan G."/>
            <person name="Ramirez L."/>
            <person name="Rash S."/>
            <person name="Retterer J."/>
            <person name="Rodriguez A."/>
            <person name="Rogers S."/>
            <person name="Salamov A."/>
            <person name="Salazar A."/>
            <person name="She X."/>
            <person name="Smith D."/>
            <person name="Slezak T."/>
            <person name="Solovyev V."/>
            <person name="Thayer N."/>
            <person name="Tice H."/>
            <person name="Tsai M."/>
            <person name="Ustaszewska A."/>
            <person name="Vo N."/>
            <person name="Wagner M."/>
            <person name="Wheeler J."/>
            <person name="Wu K."/>
            <person name="Xie G."/>
            <person name="Yang J."/>
            <person name="Dubchak I."/>
            <person name="Furey T.S."/>
            <person name="DeJong P."/>
            <person name="Dickson M."/>
            <person name="Gordon D."/>
            <person name="Eichler E.E."/>
            <person name="Pennacchio L.A."/>
            <person name="Richardson P."/>
            <person name="Stubbs L."/>
            <person name="Rokhsar D.S."/>
            <person name="Myers R.M."/>
            <person name="Rubin E.M."/>
            <person name="Lucas S.M."/>
        </authorList>
    </citation>
    <scope>NUCLEOTIDE SEQUENCE [LARGE SCALE GENOMIC DNA]</scope>
</reference>
<reference key="2">
    <citation type="journal article" date="2004" name="Genome Res.">
        <title>The status, quality, and expansion of the NIH full-length cDNA project: the Mammalian Gene Collection (MGC).</title>
        <authorList>
            <consortium name="The MGC Project Team"/>
        </authorList>
    </citation>
    <scope>NUCLEOTIDE SEQUENCE [LARGE SCALE MRNA]</scope>
    <source>
        <tissue>Chondrosarcoma</tissue>
        <tissue>Liver</tissue>
    </source>
</reference>
<reference key="3">
    <citation type="journal article" date="2013" name="J. Proteome Res.">
        <title>Toward a comprehensive characterization of a human cancer cell phosphoproteome.</title>
        <authorList>
            <person name="Zhou H."/>
            <person name="Di Palma S."/>
            <person name="Preisinger C."/>
            <person name="Peng M."/>
            <person name="Polat A.N."/>
            <person name="Heck A.J."/>
            <person name="Mohammed S."/>
        </authorList>
    </citation>
    <scope>PHOSPHORYLATION [LARGE SCALE ANALYSIS] AT THR-199 AND THR-589</scope>
    <scope>IDENTIFICATION BY MASS SPECTROMETRY [LARGE SCALE ANALYSIS]</scope>
    <source>
        <tissue>Cervix carcinoma</tissue>
    </source>
</reference>
<evidence type="ECO:0000250" key="1"/>
<evidence type="ECO:0000250" key="2">
    <source>
        <dbReference type="UniProtKB" id="Q8CJ78"/>
    </source>
</evidence>
<evidence type="ECO:0000255" key="3">
    <source>
        <dbReference type="PROSITE-ProRule" id="PRU00042"/>
    </source>
</evidence>
<evidence type="ECO:0000256" key="4">
    <source>
        <dbReference type="SAM" id="MobiDB-lite"/>
    </source>
</evidence>
<evidence type="ECO:0000305" key="5"/>
<evidence type="ECO:0007744" key="6">
    <source>
    </source>
</evidence>
<dbReference type="EMBL" id="AC008735">
    <property type="status" value="NOT_ANNOTATED_CDS"/>
    <property type="molecule type" value="Genomic_DNA"/>
</dbReference>
<dbReference type="EMBL" id="BC047332">
    <property type="protein sequence ID" value="AAH47332.1"/>
    <property type="molecule type" value="mRNA"/>
</dbReference>
<dbReference type="EMBL" id="BC089449">
    <property type="protein sequence ID" value="AAH89449.1"/>
    <property type="status" value="ALT_INIT"/>
    <property type="molecule type" value="mRNA"/>
</dbReference>
<dbReference type="CCDS" id="CCDS33116.3"/>
<dbReference type="RefSeq" id="NP_149104.3">
    <property type="nucleotide sequence ID" value="NM_033113.3"/>
</dbReference>
<dbReference type="SMR" id="Q5EBL2"/>
<dbReference type="BioGRID" id="124638">
    <property type="interactions" value="17"/>
</dbReference>
<dbReference type="FunCoup" id="Q5EBL2">
    <property type="interactions" value="136"/>
</dbReference>
<dbReference type="IntAct" id="Q5EBL2">
    <property type="interactions" value="11"/>
</dbReference>
<dbReference type="STRING" id="9606.ENSP00000469591"/>
<dbReference type="GlyGen" id="Q5EBL2">
    <property type="glycosylation" value="2 sites, 1 O-linked glycan (1 site)"/>
</dbReference>
<dbReference type="iPTMnet" id="Q5EBL2"/>
<dbReference type="PhosphoSitePlus" id="Q5EBL2"/>
<dbReference type="BioMuta" id="ZNF628"/>
<dbReference type="DMDM" id="476007835"/>
<dbReference type="jPOST" id="Q5EBL2"/>
<dbReference type="MassIVE" id="Q5EBL2"/>
<dbReference type="PaxDb" id="9606-ENSP00000469591"/>
<dbReference type="PeptideAtlas" id="Q5EBL2"/>
<dbReference type="ProteomicsDB" id="62760"/>
<dbReference type="Antibodypedia" id="50986">
    <property type="antibodies" value="19 antibodies from 9 providers"/>
</dbReference>
<dbReference type="DNASU" id="89887"/>
<dbReference type="Ensembl" id="ENST00000598519.2">
    <property type="protein sequence ID" value="ENSP00000469591.1"/>
    <property type="gene ID" value="ENSG00000197483.11"/>
</dbReference>
<dbReference type="GeneID" id="89887"/>
<dbReference type="KEGG" id="hsa:89887"/>
<dbReference type="MANE-Select" id="ENST00000598519.2">
    <property type="protein sequence ID" value="ENSP00000469591.1"/>
    <property type="RefSeq nucleotide sequence ID" value="NM_033113.3"/>
    <property type="RefSeq protein sequence ID" value="NP_149104.3"/>
</dbReference>
<dbReference type="UCSC" id="uc002qld.3">
    <property type="organism name" value="human"/>
</dbReference>
<dbReference type="AGR" id="HGNC:28054"/>
<dbReference type="CTD" id="89887"/>
<dbReference type="DisGeNET" id="89887"/>
<dbReference type="GeneCards" id="ZNF628"/>
<dbReference type="HGNC" id="HGNC:28054">
    <property type="gene designation" value="ZNF628"/>
</dbReference>
<dbReference type="HPA" id="ENSG00000197483">
    <property type="expression patterns" value="Tissue enhanced (testis)"/>
</dbReference>
<dbReference type="MIM" id="610671">
    <property type="type" value="gene"/>
</dbReference>
<dbReference type="neXtProt" id="NX_Q5EBL2"/>
<dbReference type="OpenTargets" id="ENSG00000197483"/>
<dbReference type="PharmGKB" id="PA142670507"/>
<dbReference type="VEuPathDB" id="HostDB:ENSG00000197483"/>
<dbReference type="eggNOG" id="KOG1721">
    <property type="taxonomic scope" value="Eukaryota"/>
</dbReference>
<dbReference type="GeneTree" id="ENSGT00910000144307"/>
<dbReference type="InParanoid" id="Q5EBL2"/>
<dbReference type="OMA" id="ACAERPY"/>
<dbReference type="OrthoDB" id="9885925at2759"/>
<dbReference type="PAN-GO" id="Q5EBL2">
    <property type="GO annotations" value="3 GO annotations based on evolutionary models"/>
</dbReference>
<dbReference type="PhylomeDB" id="Q5EBL2"/>
<dbReference type="TreeFam" id="TF350841"/>
<dbReference type="PathwayCommons" id="Q5EBL2"/>
<dbReference type="SignaLink" id="Q5EBL2"/>
<dbReference type="BioGRID-ORCS" id="89887">
    <property type="hits" value="21 hits in 1176 CRISPR screens"/>
</dbReference>
<dbReference type="GenomeRNAi" id="89887"/>
<dbReference type="Pharos" id="Q5EBL2">
    <property type="development level" value="Tdark"/>
</dbReference>
<dbReference type="PRO" id="PR:Q5EBL2"/>
<dbReference type="Proteomes" id="UP000005640">
    <property type="component" value="Chromosome 19"/>
</dbReference>
<dbReference type="RNAct" id="Q5EBL2">
    <property type="molecule type" value="protein"/>
</dbReference>
<dbReference type="Bgee" id="ENSG00000197483">
    <property type="expression patterns" value="Expressed in sperm and 131 other cell types or tissues"/>
</dbReference>
<dbReference type="ExpressionAtlas" id="Q5EBL2">
    <property type="expression patterns" value="baseline and differential"/>
</dbReference>
<dbReference type="GO" id="GO:0005634">
    <property type="term" value="C:nucleus"/>
    <property type="evidence" value="ECO:0007669"/>
    <property type="project" value="UniProtKB-SubCell"/>
</dbReference>
<dbReference type="GO" id="GO:0000981">
    <property type="term" value="F:DNA-binding transcription factor activity, RNA polymerase II-specific"/>
    <property type="evidence" value="ECO:0000318"/>
    <property type="project" value="GO_Central"/>
</dbReference>
<dbReference type="GO" id="GO:0000978">
    <property type="term" value="F:RNA polymerase II cis-regulatory region sequence-specific DNA binding"/>
    <property type="evidence" value="ECO:0000318"/>
    <property type="project" value="GO_Central"/>
</dbReference>
<dbReference type="GO" id="GO:0008270">
    <property type="term" value="F:zinc ion binding"/>
    <property type="evidence" value="ECO:0007669"/>
    <property type="project" value="UniProtKB-KW"/>
</dbReference>
<dbReference type="GO" id="GO:0006355">
    <property type="term" value="P:regulation of DNA-templated transcription"/>
    <property type="evidence" value="ECO:0000318"/>
    <property type="project" value="GO_Central"/>
</dbReference>
<dbReference type="GO" id="GO:0007283">
    <property type="term" value="P:spermatogenesis"/>
    <property type="evidence" value="ECO:0007669"/>
    <property type="project" value="Ensembl"/>
</dbReference>
<dbReference type="FunFam" id="3.30.160.60:FF:000111">
    <property type="entry name" value="GLI family zinc finger 4"/>
    <property type="match status" value="1"/>
</dbReference>
<dbReference type="FunFam" id="3.30.160.60:FF:002716">
    <property type="entry name" value="Zinc finger protein 212"/>
    <property type="match status" value="1"/>
</dbReference>
<dbReference type="FunFam" id="3.30.160.60:FF:001049">
    <property type="entry name" value="zinc finger protein 319"/>
    <property type="match status" value="1"/>
</dbReference>
<dbReference type="FunFam" id="3.30.160.60:FF:000016">
    <property type="entry name" value="zinc finger protein 37 homolog"/>
    <property type="match status" value="1"/>
</dbReference>
<dbReference type="FunFam" id="3.30.160.60:FF:000202">
    <property type="entry name" value="Zinc finger protein 574"/>
    <property type="match status" value="1"/>
</dbReference>
<dbReference type="FunFam" id="3.30.160.60:FF:000213">
    <property type="entry name" value="Zinc finger protein 624"/>
    <property type="match status" value="2"/>
</dbReference>
<dbReference type="FunFam" id="3.30.160.60:FF:001088">
    <property type="entry name" value="Zinc finger protein 628"/>
    <property type="match status" value="2"/>
</dbReference>
<dbReference type="FunFam" id="3.30.160.60:FF:001642">
    <property type="entry name" value="Zinc finger protein 628"/>
    <property type="match status" value="1"/>
</dbReference>
<dbReference type="FunFam" id="3.30.160.60:FF:001866">
    <property type="entry name" value="Zinc finger protein 628"/>
    <property type="match status" value="1"/>
</dbReference>
<dbReference type="FunFam" id="3.30.160.60:FF:000968">
    <property type="entry name" value="zinc finger protein 628"/>
    <property type="match status" value="2"/>
</dbReference>
<dbReference type="FunFam" id="3.30.160.60:FF:001824">
    <property type="entry name" value="zinc finger protein 628"/>
    <property type="match status" value="1"/>
</dbReference>
<dbReference type="FunFam" id="3.30.160.60:FF:000180">
    <property type="entry name" value="Zinc finger protein 689"/>
    <property type="match status" value="1"/>
</dbReference>
<dbReference type="Gene3D" id="3.30.160.60">
    <property type="entry name" value="Classic Zinc Finger"/>
    <property type="match status" value="15"/>
</dbReference>
<dbReference type="InterPro" id="IPR036236">
    <property type="entry name" value="Znf_C2H2_sf"/>
</dbReference>
<dbReference type="InterPro" id="IPR013087">
    <property type="entry name" value="Znf_C2H2_type"/>
</dbReference>
<dbReference type="PANTHER" id="PTHR23226:SF375">
    <property type="entry name" value="C2H2-TYPE DOMAIN-CONTAINING PROTEIN-RELATED"/>
    <property type="match status" value="1"/>
</dbReference>
<dbReference type="PANTHER" id="PTHR23226">
    <property type="entry name" value="ZINC FINGER AND SCAN DOMAIN-CONTAINING"/>
    <property type="match status" value="1"/>
</dbReference>
<dbReference type="Pfam" id="PF00096">
    <property type="entry name" value="zf-C2H2"/>
    <property type="match status" value="12"/>
</dbReference>
<dbReference type="SMART" id="SM00355">
    <property type="entry name" value="ZnF_C2H2"/>
    <property type="match status" value="17"/>
</dbReference>
<dbReference type="SUPFAM" id="SSF57667">
    <property type="entry name" value="beta-beta-alpha zinc fingers"/>
    <property type="match status" value="9"/>
</dbReference>
<dbReference type="PROSITE" id="PS00028">
    <property type="entry name" value="ZINC_FINGER_C2H2_1"/>
    <property type="match status" value="16"/>
</dbReference>
<dbReference type="PROSITE" id="PS50157">
    <property type="entry name" value="ZINC_FINGER_C2H2_2"/>
    <property type="match status" value="17"/>
</dbReference>
<comment type="function">
    <text evidence="2">Transcriptional activator. Binds DNA on GT-box consensus sequence 5'-TTGGTT-3'. Plays a role in spermiogenesis.</text>
</comment>
<comment type="subunit">
    <text evidence="2">Interacts with TAF4B.</text>
</comment>
<comment type="interaction">
    <interactant intactId="EBI-13086230">
        <id>Q5EBL2</id>
    </interactant>
    <interactant intactId="EBI-742102">
        <id>Q8IYI6</id>
        <label>EXOC8</label>
    </interactant>
    <organismsDiffer>false</organismsDiffer>
    <experiments>3</experiments>
</comment>
<comment type="interaction">
    <interactant intactId="EBI-13086230">
        <id>Q5EBL2</id>
    </interactant>
    <interactant intactId="EBI-5916454">
        <id>A6NEM1</id>
        <label>GOLGA6L9</label>
    </interactant>
    <organismsDiffer>false</organismsDiffer>
    <experiments>3</experiments>
</comment>
<comment type="interaction">
    <interactant intactId="EBI-13086230">
        <id>Q5EBL2</id>
    </interactant>
    <interactant intactId="EBI-11988931">
        <id>Q96C03-3</id>
        <label>MIEF2</label>
    </interactant>
    <organismsDiffer>false</organismsDiffer>
    <experiments>3</experiments>
</comment>
<comment type="subcellular location">
    <subcellularLocation>
        <location evidence="1">Nucleus</location>
    </subcellularLocation>
</comment>
<comment type="caution">
    <text evidence="5">It is uncertain whether Met-1 or Met-5 is the initiator.</text>
</comment>
<comment type="sequence caution" evidence="5">
    <conflict type="erroneous initiation">
        <sequence resource="EMBL-CDS" id="AAH89449"/>
    </conflict>
    <text>Truncated N-terminus.</text>
</comment>
<gene>
    <name type="primary">ZNF628</name>
</gene>
<keyword id="KW-0238">DNA-binding</keyword>
<keyword id="KW-0479">Metal-binding</keyword>
<keyword id="KW-0539">Nucleus</keyword>
<keyword id="KW-0597">Phosphoprotein</keyword>
<keyword id="KW-1267">Proteomics identification</keyword>
<keyword id="KW-1185">Reference proteome</keyword>
<keyword id="KW-0677">Repeat</keyword>
<keyword id="KW-0804">Transcription</keyword>
<keyword id="KW-0805">Transcription regulation</keyword>
<keyword id="KW-0862">Zinc</keyword>
<keyword id="KW-0863">Zinc-finger</keyword>
<proteinExistence type="evidence at protein level"/>
<feature type="chain" id="PRO_0000246070" description="Zinc finger protein 628">
    <location>
        <begin position="1"/>
        <end position="1059"/>
    </location>
</feature>
<feature type="repeat" description="1" evidence="2">
    <location>
        <begin position="818"/>
        <end position="831"/>
    </location>
</feature>
<feature type="repeat" description="2" evidence="2">
    <location>
        <begin position="832"/>
        <end position="842"/>
    </location>
</feature>
<feature type="repeat" description="3" evidence="2">
    <location>
        <begin position="843"/>
        <end position="853"/>
    </location>
</feature>
<feature type="repeat" description="4" evidence="2">
    <location>
        <begin position="854"/>
        <end position="864"/>
    </location>
</feature>
<feature type="zinc finger region" description="C2H2-type 1" evidence="3">
    <location>
        <begin position="36"/>
        <end position="58"/>
    </location>
</feature>
<feature type="zinc finger region" description="C2H2-type 2" evidence="3">
    <location>
        <begin position="64"/>
        <end position="86"/>
    </location>
</feature>
<feature type="zinc finger region" description="C2H2-type 3" evidence="3">
    <location>
        <begin position="92"/>
        <end position="114"/>
    </location>
</feature>
<feature type="zinc finger region" description="C2H2-type 4" evidence="3">
    <location>
        <begin position="120"/>
        <end position="142"/>
    </location>
</feature>
<feature type="zinc finger region" description="C2H2-type 5" evidence="3">
    <location>
        <begin position="148"/>
        <end position="170"/>
    </location>
</feature>
<feature type="zinc finger region" description="C2H2-type 6" evidence="3">
    <location>
        <begin position="176"/>
        <end position="198"/>
    </location>
</feature>
<feature type="zinc finger region" description="C2H2-type 7" evidence="3">
    <location>
        <begin position="204"/>
        <end position="226"/>
    </location>
</feature>
<feature type="zinc finger region" description="C2H2-type 8" evidence="3">
    <location>
        <begin position="356"/>
        <end position="378"/>
    </location>
</feature>
<feature type="zinc finger region" description="C2H2-type 9" evidence="3">
    <location>
        <begin position="386"/>
        <end position="408"/>
    </location>
</feature>
<feature type="zinc finger region" description="C2H2-type 10" evidence="3">
    <location>
        <begin position="454"/>
        <end position="476"/>
    </location>
</feature>
<feature type="zinc finger region" description="C2H2-type 11" evidence="3">
    <location>
        <begin position="482"/>
        <end position="504"/>
    </location>
</feature>
<feature type="zinc finger region" description="C2H2-type 12" evidence="3">
    <location>
        <begin position="510"/>
        <end position="532"/>
    </location>
</feature>
<feature type="zinc finger region" description="C2H2-type 13" evidence="3">
    <location>
        <begin position="538"/>
        <end position="560"/>
    </location>
</feature>
<feature type="zinc finger region" description="C2H2-type 14" evidence="3">
    <location>
        <begin position="566"/>
        <end position="588"/>
    </location>
</feature>
<feature type="zinc finger region" description="C2H2-type 15" evidence="3">
    <location>
        <begin position="594"/>
        <end position="616"/>
    </location>
</feature>
<feature type="zinc finger region" description="C2H2-type 16" evidence="3">
    <location>
        <begin position="622"/>
        <end position="644"/>
    </location>
</feature>
<feature type="region of interest" description="Disordered" evidence="4">
    <location>
        <begin position="226"/>
        <end position="247"/>
    </location>
</feature>
<feature type="region of interest" description="Disordered" evidence="4">
    <location>
        <begin position="260"/>
        <end position="280"/>
    </location>
</feature>
<feature type="region of interest" description="Disordered" evidence="4">
    <location>
        <begin position="312"/>
        <end position="351"/>
    </location>
</feature>
<feature type="region of interest" description="Disordered" evidence="4">
    <location>
        <begin position="644"/>
        <end position="674"/>
    </location>
</feature>
<feature type="region of interest" description="4 X approximate tandem repeats" evidence="2">
    <location>
        <begin position="818"/>
        <end position="864"/>
    </location>
</feature>
<feature type="region of interest" description="Interaction with TAF4B" evidence="2">
    <location>
        <begin position="943"/>
        <end position="1059"/>
    </location>
</feature>
<feature type="compositionally biased region" description="Low complexity" evidence="4">
    <location>
        <begin position="228"/>
        <end position="237"/>
    </location>
</feature>
<feature type="compositionally biased region" description="Pro residues" evidence="4">
    <location>
        <begin position="263"/>
        <end position="279"/>
    </location>
</feature>
<feature type="compositionally biased region" description="Low complexity" evidence="4">
    <location>
        <begin position="323"/>
        <end position="335"/>
    </location>
</feature>
<feature type="compositionally biased region" description="Pro residues" evidence="4">
    <location>
        <begin position="336"/>
        <end position="351"/>
    </location>
</feature>
<feature type="compositionally biased region" description="Low complexity" evidence="4">
    <location>
        <begin position="644"/>
        <end position="658"/>
    </location>
</feature>
<feature type="modified residue" description="Phosphothreonine" evidence="6">
    <location>
        <position position="199"/>
    </location>
</feature>
<feature type="modified residue" description="Phosphothreonine" evidence="6">
    <location>
        <position position="589"/>
    </location>
</feature>
<feature type="sequence conflict" description="In Ref. 2; AAH89449." evidence="5" ref="2">
    <original>T</original>
    <variation>A</variation>
    <location>
        <position position="234"/>
    </location>
</feature>
<feature type="sequence conflict" description="In Ref. 2; AAH89449." evidence="5" ref="2">
    <original>V</original>
    <variation>A</variation>
    <location>
        <position position="439"/>
    </location>
</feature>
<protein>
    <recommendedName>
        <fullName>Zinc finger protein 628</fullName>
    </recommendedName>
</protein>
<sequence length="1059" mass="110887">MSGVMVGSHADMAPASTAEGAGEKPGPAAPAPAAQYECGECGKSFRWSSRLLHHQRTHTGERPYKCPDCPKAFKGSSALLYHQRGHTGERPYQCPDCPKAFKRSSLLQIHRSVHTGLRAFICGQCGLAFKWSSHYQYHLRQHTGERPYPCPDCPKAFKNSSSLRRHRHVHTGERPYTCGVCGKSFTQSTNLRQHQRVHTGERPFRCPLCPKTFTHSSNLLLHQRTHGAAPAPGTASAAPPPQSREPGKVFVCDAYLQRHLQPHSPPAPPAPPPPPPPVVPELFLAAAETTVELVYRCDGCEQGFSSEELLLEHQPCPGPDAAPQPQEAPAEAPKADQPPSPLPQPPPPAAAPAPGFACLPCGKSFRTVAGLSRHQHSHGAAGGQAFRCGSCDGSFPQLASLLAHQQCHVEEAAAGRPPPQAEAAEVTCPQEPLAPAAPVPPPPPSAPASAERPYKCAECGKSFKGSSGLRYHLRDHTGERPYQCGECGKAFKRSSLLAIHQRVHTGLRAFTCGQCGLTFKWSSHYQYHLRLHSGERPYACGECGKAFRNTSCLRRHRHVHTGERPHACGVCGKSFAQTSNLRQHQRVHTGERPFRCPLCPKTFTHSSNLLLHQRTHSAERPFTCPICGRGFVMAAYLQRHLRTHAPANTPPSTTAPAAGPQPPAPLAAARAPPATQDVHVLPHLQATLSLEVAGGTAQAPSLGPAAPNSQTFLLVQTAQGLQLIPSSVQPPTPPPPPAPPKLILLPSSSAGAGGGRARQGPRAVGKAGQGAGVVWLPGPGGLGVQGAASAGASGTGQSLIVLQNVGGGEAGPQEMSGVQLQPLRPAPEVTTVQLQPAQEVTTVQLQPAQEVTTVQLQPAQEVTTVQLQPVAGQLSNSSGGAVATEAPNLLVVQSGAAEELLTGPGPGEAGDGEASTGVVQDVLFETLQTDEGLQSVLVLSGADGEQTRLCVQEVETLPPGLTEPPATGPPGQKLLIIRSAPATELLDSSNTGGGTATLQLLAPPPSGPASGPAGLPGAPASQMVQVVPAGAGPGVMTPQGLPSIQIVQTLPAVQLVHTF</sequence>
<name>ZN628_HUMAN</name>
<accession>Q5EBL2</accession>
<accession>Q86X34</accession>